<organism>
    <name type="scientific">Nitrosomonas eutropha (strain DSM 101675 / C91 / Nm57)</name>
    <dbReference type="NCBI Taxonomy" id="335283"/>
    <lineage>
        <taxon>Bacteria</taxon>
        <taxon>Pseudomonadati</taxon>
        <taxon>Pseudomonadota</taxon>
        <taxon>Betaproteobacteria</taxon>
        <taxon>Nitrosomonadales</taxon>
        <taxon>Nitrosomonadaceae</taxon>
        <taxon>Nitrosomonas</taxon>
    </lineage>
</organism>
<comment type="function">
    <text evidence="1">Catalyzes the complicated ring closure reaction between the two acyclic compounds 1-deoxy-D-xylulose-5-phosphate (DXP) and 3-amino-2-oxopropyl phosphate (1-amino-acetone-3-phosphate or AAP) to form pyridoxine 5'-phosphate (PNP) and inorganic phosphate.</text>
</comment>
<comment type="catalytic activity">
    <reaction evidence="1">
        <text>3-amino-2-oxopropyl phosphate + 1-deoxy-D-xylulose 5-phosphate = pyridoxine 5'-phosphate + phosphate + 2 H2O + H(+)</text>
        <dbReference type="Rhea" id="RHEA:15265"/>
        <dbReference type="ChEBI" id="CHEBI:15377"/>
        <dbReference type="ChEBI" id="CHEBI:15378"/>
        <dbReference type="ChEBI" id="CHEBI:43474"/>
        <dbReference type="ChEBI" id="CHEBI:57279"/>
        <dbReference type="ChEBI" id="CHEBI:57792"/>
        <dbReference type="ChEBI" id="CHEBI:58589"/>
        <dbReference type="EC" id="2.6.99.2"/>
    </reaction>
</comment>
<comment type="pathway">
    <text evidence="1">Cofactor biosynthesis; pyridoxine 5'-phosphate biosynthesis; pyridoxine 5'-phosphate from D-erythrose 4-phosphate: step 5/5.</text>
</comment>
<comment type="subunit">
    <text evidence="1">Homooctamer; tetramer of dimers.</text>
</comment>
<comment type="subcellular location">
    <subcellularLocation>
        <location evidence="1">Cytoplasm</location>
    </subcellularLocation>
</comment>
<comment type="similarity">
    <text evidence="1">Belongs to the PNP synthase family.</text>
</comment>
<sequence>MIALGVNIDHVATLRQARGTDYPSPIKAALVAEESGADAITLHLREDRRHIQEEDVIILRERLKTRMNLESAVTEEMISFACRIKPHDICLVPERREELTTEGGLDVIRHFDQVSAACKRLTEAGIRVSLFVDARADQIDAAIRVGAPVIELHTGHYADAATSEAQQAELETIRSMAAYAFSRGLQVNAGHSLHYQNTTPIAFIPEITELNIGHAIVARALFIGFAQAVREMKTLMQEARA</sequence>
<keyword id="KW-0963">Cytoplasm</keyword>
<keyword id="KW-0664">Pyridoxine biosynthesis</keyword>
<keyword id="KW-0808">Transferase</keyword>
<proteinExistence type="inferred from homology"/>
<evidence type="ECO:0000255" key="1">
    <source>
        <dbReference type="HAMAP-Rule" id="MF_00279"/>
    </source>
</evidence>
<name>PDXJ_NITEC</name>
<gene>
    <name evidence="1" type="primary">pdxJ</name>
    <name type="ordered locus">Neut_1776</name>
</gene>
<protein>
    <recommendedName>
        <fullName evidence="1">Pyridoxine 5'-phosphate synthase</fullName>
        <shortName evidence="1">PNP synthase</shortName>
        <ecNumber evidence="1">2.6.99.2</ecNumber>
    </recommendedName>
</protein>
<accession>Q0AF72</accession>
<dbReference type="EC" id="2.6.99.2" evidence="1"/>
<dbReference type="EMBL" id="CP000450">
    <property type="protein sequence ID" value="ABI60010.1"/>
    <property type="molecule type" value="Genomic_DNA"/>
</dbReference>
<dbReference type="RefSeq" id="WP_011634816.1">
    <property type="nucleotide sequence ID" value="NC_008344.1"/>
</dbReference>
<dbReference type="SMR" id="Q0AF72"/>
<dbReference type="STRING" id="335283.Neut_1776"/>
<dbReference type="KEGG" id="net:Neut_1776"/>
<dbReference type="eggNOG" id="COG0854">
    <property type="taxonomic scope" value="Bacteria"/>
</dbReference>
<dbReference type="HOGENOM" id="CLU_074563_0_0_4"/>
<dbReference type="OrthoDB" id="9806590at2"/>
<dbReference type="UniPathway" id="UPA00244">
    <property type="reaction ID" value="UER00313"/>
</dbReference>
<dbReference type="Proteomes" id="UP000001966">
    <property type="component" value="Chromosome"/>
</dbReference>
<dbReference type="GO" id="GO:0005829">
    <property type="term" value="C:cytosol"/>
    <property type="evidence" value="ECO:0007669"/>
    <property type="project" value="TreeGrafter"/>
</dbReference>
<dbReference type="GO" id="GO:0033856">
    <property type="term" value="F:pyridoxine 5'-phosphate synthase activity"/>
    <property type="evidence" value="ECO:0007669"/>
    <property type="project" value="UniProtKB-EC"/>
</dbReference>
<dbReference type="GO" id="GO:0008615">
    <property type="term" value="P:pyridoxine biosynthetic process"/>
    <property type="evidence" value="ECO:0007669"/>
    <property type="project" value="UniProtKB-UniRule"/>
</dbReference>
<dbReference type="CDD" id="cd00003">
    <property type="entry name" value="PNPsynthase"/>
    <property type="match status" value="1"/>
</dbReference>
<dbReference type="FunFam" id="3.20.20.70:FF:000042">
    <property type="entry name" value="Pyridoxine 5'-phosphate synthase"/>
    <property type="match status" value="1"/>
</dbReference>
<dbReference type="Gene3D" id="3.20.20.70">
    <property type="entry name" value="Aldolase class I"/>
    <property type="match status" value="1"/>
</dbReference>
<dbReference type="HAMAP" id="MF_00279">
    <property type="entry name" value="PdxJ"/>
    <property type="match status" value="1"/>
</dbReference>
<dbReference type="InterPro" id="IPR013785">
    <property type="entry name" value="Aldolase_TIM"/>
</dbReference>
<dbReference type="InterPro" id="IPR004569">
    <property type="entry name" value="PyrdxlP_synth_PdxJ"/>
</dbReference>
<dbReference type="InterPro" id="IPR036130">
    <property type="entry name" value="Pyridoxine-5'_phos_synth"/>
</dbReference>
<dbReference type="NCBIfam" id="TIGR00559">
    <property type="entry name" value="pdxJ"/>
    <property type="match status" value="1"/>
</dbReference>
<dbReference type="NCBIfam" id="NF003623">
    <property type="entry name" value="PRK05265.1-1"/>
    <property type="match status" value="1"/>
</dbReference>
<dbReference type="NCBIfam" id="NF003625">
    <property type="entry name" value="PRK05265.1-3"/>
    <property type="match status" value="1"/>
</dbReference>
<dbReference type="NCBIfam" id="NF003627">
    <property type="entry name" value="PRK05265.1-5"/>
    <property type="match status" value="1"/>
</dbReference>
<dbReference type="PANTHER" id="PTHR30456">
    <property type="entry name" value="PYRIDOXINE 5'-PHOSPHATE SYNTHASE"/>
    <property type="match status" value="1"/>
</dbReference>
<dbReference type="PANTHER" id="PTHR30456:SF0">
    <property type="entry name" value="PYRIDOXINE 5'-PHOSPHATE SYNTHASE"/>
    <property type="match status" value="1"/>
</dbReference>
<dbReference type="Pfam" id="PF03740">
    <property type="entry name" value="PdxJ"/>
    <property type="match status" value="1"/>
</dbReference>
<dbReference type="SUPFAM" id="SSF63892">
    <property type="entry name" value="Pyridoxine 5'-phosphate synthase"/>
    <property type="match status" value="1"/>
</dbReference>
<feature type="chain" id="PRO_1000022381" description="Pyridoxine 5'-phosphate synthase">
    <location>
        <begin position="1"/>
        <end position="241"/>
    </location>
</feature>
<feature type="active site" description="Proton acceptor" evidence="1">
    <location>
        <position position="43"/>
    </location>
</feature>
<feature type="active site" description="Proton acceptor" evidence="1">
    <location>
        <position position="70"/>
    </location>
</feature>
<feature type="active site" description="Proton donor" evidence="1">
    <location>
        <position position="191"/>
    </location>
</feature>
<feature type="binding site" evidence="1">
    <location>
        <position position="7"/>
    </location>
    <ligand>
        <name>3-amino-2-oxopropyl phosphate</name>
        <dbReference type="ChEBI" id="CHEBI:57279"/>
    </ligand>
</feature>
<feature type="binding site" evidence="1">
    <location>
        <begin position="9"/>
        <end position="10"/>
    </location>
    <ligand>
        <name>1-deoxy-D-xylulose 5-phosphate</name>
        <dbReference type="ChEBI" id="CHEBI:57792"/>
    </ligand>
</feature>
<feature type="binding site" evidence="1">
    <location>
        <position position="18"/>
    </location>
    <ligand>
        <name>3-amino-2-oxopropyl phosphate</name>
        <dbReference type="ChEBI" id="CHEBI:57279"/>
    </ligand>
</feature>
<feature type="binding site" evidence="1">
    <location>
        <position position="45"/>
    </location>
    <ligand>
        <name>1-deoxy-D-xylulose 5-phosphate</name>
        <dbReference type="ChEBI" id="CHEBI:57792"/>
    </ligand>
</feature>
<feature type="binding site" evidence="1">
    <location>
        <position position="50"/>
    </location>
    <ligand>
        <name>1-deoxy-D-xylulose 5-phosphate</name>
        <dbReference type="ChEBI" id="CHEBI:57792"/>
    </ligand>
</feature>
<feature type="binding site" evidence="1">
    <location>
        <position position="100"/>
    </location>
    <ligand>
        <name>1-deoxy-D-xylulose 5-phosphate</name>
        <dbReference type="ChEBI" id="CHEBI:57792"/>
    </ligand>
</feature>
<feature type="binding site" evidence="1">
    <location>
        <position position="192"/>
    </location>
    <ligand>
        <name>3-amino-2-oxopropyl phosphate</name>
        <dbReference type="ChEBI" id="CHEBI:57279"/>
    </ligand>
</feature>
<feature type="binding site" evidence="1">
    <location>
        <begin position="213"/>
        <end position="214"/>
    </location>
    <ligand>
        <name>3-amino-2-oxopropyl phosphate</name>
        <dbReference type="ChEBI" id="CHEBI:57279"/>
    </ligand>
</feature>
<feature type="site" description="Transition state stabilizer" evidence="1">
    <location>
        <position position="151"/>
    </location>
</feature>
<reference key="1">
    <citation type="journal article" date="2007" name="Environ. Microbiol.">
        <title>Whole-genome analysis of the ammonia-oxidizing bacterium, Nitrosomonas eutropha C91: implications for niche adaptation.</title>
        <authorList>
            <person name="Stein L.Y."/>
            <person name="Arp D.J."/>
            <person name="Berube P.M."/>
            <person name="Chain P.S."/>
            <person name="Hauser L."/>
            <person name="Jetten M.S."/>
            <person name="Klotz M.G."/>
            <person name="Larimer F.W."/>
            <person name="Norton J.M."/>
            <person name="Op den Camp H.J.M."/>
            <person name="Shin M."/>
            <person name="Wei X."/>
        </authorList>
    </citation>
    <scope>NUCLEOTIDE SEQUENCE [LARGE SCALE GENOMIC DNA]</scope>
    <source>
        <strain>DSM 101675 / C91 / Nm57</strain>
    </source>
</reference>